<comment type="function">
    <text evidence="1">Component of the large ribosomal subunit. The ribosome is a large ribonucleoprotein complex responsible for the synthesis of proteins in the cell.</text>
</comment>
<comment type="subunit">
    <text evidence="1">Component of the large ribosomal subunit.</text>
</comment>
<comment type="subcellular location">
    <subcellularLocation>
        <location evidence="1">Cytoplasm</location>
    </subcellularLocation>
</comment>
<comment type="similarity">
    <text evidence="2">Belongs to the eukaryotic ribosomal protein eL22 family.</text>
</comment>
<organism>
    <name type="scientific">Xenopus laevis</name>
    <name type="common">African clawed frog</name>
    <dbReference type="NCBI Taxonomy" id="8355"/>
    <lineage>
        <taxon>Eukaryota</taxon>
        <taxon>Metazoa</taxon>
        <taxon>Chordata</taxon>
        <taxon>Craniata</taxon>
        <taxon>Vertebrata</taxon>
        <taxon>Euteleostomi</taxon>
        <taxon>Amphibia</taxon>
        <taxon>Batrachia</taxon>
        <taxon>Anura</taxon>
        <taxon>Pipoidea</taxon>
        <taxon>Pipidae</taxon>
        <taxon>Xenopodinae</taxon>
        <taxon>Xenopus</taxon>
        <taxon>Xenopus</taxon>
    </lineage>
</organism>
<feature type="chain" id="PRO_0000215506" description="Large ribosomal subunit protein eL22">
    <location>
        <begin position="1"/>
        <end position="128"/>
    </location>
</feature>
<accession>P50886</accession>
<accession>Q58ES5</accession>
<reference key="1">
    <citation type="submission" date="1995-12" db="EMBL/GenBank/DDBJ databases">
        <authorList>
            <person name="Opsahl M.L."/>
        </authorList>
    </citation>
    <scope>NUCLEOTIDE SEQUENCE [MRNA]</scope>
</reference>
<reference key="2">
    <citation type="submission" date="2005-03" db="EMBL/GenBank/DDBJ databases">
        <authorList>
            <consortium name="NIH - Xenopus Gene Collection (XGC) project"/>
        </authorList>
    </citation>
    <scope>NUCLEOTIDE SEQUENCE [LARGE SCALE MRNA]</scope>
    <source>
        <tissue>Kidney</tissue>
    </source>
</reference>
<dbReference type="EMBL" id="X94243">
    <property type="protein sequence ID" value="CAA63927.1"/>
    <property type="molecule type" value="mRNA"/>
</dbReference>
<dbReference type="EMBL" id="BC091778">
    <property type="protein sequence ID" value="AAH91778.1"/>
    <property type="molecule type" value="mRNA"/>
</dbReference>
<dbReference type="RefSeq" id="NP_001081541.1">
    <property type="nucleotide sequence ID" value="NM_001088072.1"/>
</dbReference>
<dbReference type="RefSeq" id="XP_018081603.1">
    <property type="nucleotide sequence ID" value="XM_018226114.1"/>
</dbReference>
<dbReference type="PDB" id="7OYC">
    <property type="method" value="EM"/>
    <property type="resolution" value="2.40 A"/>
    <property type="chains" value="U1=1-128"/>
</dbReference>
<dbReference type="PDBsum" id="7OYC"/>
<dbReference type="EMDB" id="EMD-13113"/>
<dbReference type="SMR" id="P50886"/>
<dbReference type="BioGRID" id="99241">
    <property type="interactions" value="2"/>
</dbReference>
<dbReference type="IntAct" id="P50886">
    <property type="interactions" value="1"/>
</dbReference>
<dbReference type="DNASU" id="397904"/>
<dbReference type="GeneID" id="397904"/>
<dbReference type="KEGG" id="xla:108696602"/>
<dbReference type="KEGG" id="xla:397904"/>
<dbReference type="AGR" id="Xenbase:XB-GENE-978445"/>
<dbReference type="CTD" id="108696602"/>
<dbReference type="CTD" id="397904"/>
<dbReference type="Xenbase" id="XB-GENE-978445">
    <property type="gene designation" value="rpl22.S"/>
</dbReference>
<dbReference type="OrthoDB" id="10259820at2759"/>
<dbReference type="CD-CODE" id="78E86D56">
    <property type="entry name" value="Mitochondrial cloud"/>
</dbReference>
<dbReference type="Proteomes" id="UP000186698">
    <property type="component" value="Chromosome 7L"/>
</dbReference>
<dbReference type="Proteomes" id="UP000186698">
    <property type="component" value="Chromosome 7S"/>
</dbReference>
<dbReference type="Bgee" id="108696602">
    <property type="expression patterns" value="Expressed in lung and 19 other cell types or tissues"/>
</dbReference>
<dbReference type="GO" id="GO:0005737">
    <property type="term" value="C:cytoplasm"/>
    <property type="evidence" value="ECO:0007669"/>
    <property type="project" value="UniProtKB-SubCell"/>
</dbReference>
<dbReference type="GO" id="GO:1990904">
    <property type="term" value="C:ribonucleoprotein complex"/>
    <property type="evidence" value="ECO:0007669"/>
    <property type="project" value="UniProtKB-KW"/>
</dbReference>
<dbReference type="GO" id="GO:0005840">
    <property type="term" value="C:ribosome"/>
    <property type="evidence" value="ECO:0007669"/>
    <property type="project" value="UniProtKB-KW"/>
</dbReference>
<dbReference type="GO" id="GO:0003723">
    <property type="term" value="F:RNA binding"/>
    <property type="evidence" value="ECO:0000318"/>
    <property type="project" value="GO_Central"/>
</dbReference>
<dbReference type="GO" id="GO:0003735">
    <property type="term" value="F:structural constituent of ribosome"/>
    <property type="evidence" value="ECO:0000318"/>
    <property type="project" value="GO_Central"/>
</dbReference>
<dbReference type="GO" id="GO:0002181">
    <property type="term" value="P:cytoplasmic translation"/>
    <property type="evidence" value="ECO:0000318"/>
    <property type="project" value="GO_Central"/>
</dbReference>
<dbReference type="FunFam" id="3.30.1360.210:FF:000001">
    <property type="entry name" value="60S ribosomal protein L22 1"/>
    <property type="match status" value="1"/>
</dbReference>
<dbReference type="Gene3D" id="3.30.1360.210">
    <property type="match status" value="1"/>
</dbReference>
<dbReference type="InterPro" id="IPR002671">
    <property type="entry name" value="Ribosomal_eL22"/>
</dbReference>
<dbReference type="InterPro" id="IPR038526">
    <property type="entry name" value="Ribosomal_eL22_sf"/>
</dbReference>
<dbReference type="PANTHER" id="PTHR10064">
    <property type="entry name" value="60S RIBOSOMAL PROTEIN L22"/>
    <property type="match status" value="1"/>
</dbReference>
<dbReference type="PANTHER" id="PTHR10064:SF2">
    <property type="entry name" value="LARGE RIBOSOMAL SUBUNIT PROTEIN EL22"/>
    <property type="match status" value="1"/>
</dbReference>
<dbReference type="Pfam" id="PF01776">
    <property type="entry name" value="Ribosomal_L22e"/>
    <property type="match status" value="1"/>
</dbReference>
<sequence length="128" mass="14816">MAPVKKTVTKGSKKKKQLLKFTLDCTHPVEDGIMDAANFEQFLHDRIKVNGKVGNLGGGVVSIERSKSKITVSSEVPFSKRYLKYLTKKYLKKNNLRDWLRVVANSKESYELRYFQINQDEEEEEDED</sequence>
<protein>
    <recommendedName>
        <fullName evidence="2">Large ribosomal subunit protein eL22</fullName>
    </recommendedName>
    <alternativeName>
        <fullName>60S ribosomal protein L22</fullName>
    </alternativeName>
</protein>
<gene>
    <name type="primary">rpl22</name>
</gene>
<keyword id="KW-0002">3D-structure</keyword>
<keyword id="KW-0963">Cytoplasm</keyword>
<keyword id="KW-1185">Reference proteome</keyword>
<keyword id="KW-0687">Ribonucleoprotein</keyword>
<keyword id="KW-0689">Ribosomal protein</keyword>
<name>RL22_XENLA</name>
<evidence type="ECO:0000250" key="1">
    <source>
        <dbReference type="UniProtKB" id="P35268"/>
    </source>
</evidence>
<evidence type="ECO:0000305" key="2"/>
<proteinExistence type="evidence at protein level"/>